<evidence type="ECO:0000255" key="1">
    <source>
        <dbReference type="HAMAP-Rule" id="MF_01954"/>
    </source>
</evidence>
<name>URE2_DECAR</name>
<reference key="1">
    <citation type="journal article" date="2009" name="BMC Genomics">
        <title>Metabolic analysis of the soil microbe Dechloromonas aromatica str. RCB: indications of a surprisingly complex life-style and cryptic anaerobic pathways for aromatic degradation.</title>
        <authorList>
            <person name="Salinero K.K."/>
            <person name="Keller K."/>
            <person name="Feil W.S."/>
            <person name="Feil H."/>
            <person name="Trong S."/>
            <person name="Di Bartolo G."/>
            <person name="Lapidus A."/>
        </authorList>
    </citation>
    <scope>NUCLEOTIDE SEQUENCE [LARGE SCALE GENOMIC DNA]</scope>
    <source>
        <strain>RCB</strain>
    </source>
</reference>
<dbReference type="EC" id="3.5.1.5" evidence="1"/>
<dbReference type="EMBL" id="CP000089">
    <property type="protein sequence ID" value="AAZ46177.1"/>
    <property type="molecule type" value="Genomic_DNA"/>
</dbReference>
<dbReference type="SMR" id="Q47G54"/>
<dbReference type="STRING" id="159087.Daro_1428"/>
<dbReference type="KEGG" id="dar:Daro_1428"/>
<dbReference type="eggNOG" id="COG0832">
    <property type="taxonomic scope" value="Bacteria"/>
</dbReference>
<dbReference type="HOGENOM" id="CLU_129707_1_1_4"/>
<dbReference type="OrthoDB" id="9797217at2"/>
<dbReference type="UniPathway" id="UPA00258">
    <property type="reaction ID" value="UER00370"/>
</dbReference>
<dbReference type="GO" id="GO:0035550">
    <property type="term" value="C:urease complex"/>
    <property type="evidence" value="ECO:0007669"/>
    <property type="project" value="InterPro"/>
</dbReference>
<dbReference type="GO" id="GO:0009039">
    <property type="term" value="F:urease activity"/>
    <property type="evidence" value="ECO:0007669"/>
    <property type="project" value="UniProtKB-UniRule"/>
</dbReference>
<dbReference type="GO" id="GO:0043419">
    <property type="term" value="P:urea catabolic process"/>
    <property type="evidence" value="ECO:0007669"/>
    <property type="project" value="UniProtKB-UniRule"/>
</dbReference>
<dbReference type="CDD" id="cd00407">
    <property type="entry name" value="Urease_beta"/>
    <property type="match status" value="1"/>
</dbReference>
<dbReference type="FunFam" id="2.10.150.10:FF:000001">
    <property type="entry name" value="Urease subunit beta"/>
    <property type="match status" value="1"/>
</dbReference>
<dbReference type="Gene3D" id="2.10.150.10">
    <property type="entry name" value="Urease, beta subunit"/>
    <property type="match status" value="1"/>
</dbReference>
<dbReference type="HAMAP" id="MF_01954">
    <property type="entry name" value="Urease_beta"/>
    <property type="match status" value="1"/>
</dbReference>
<dbReference type="InterPro" id="IPR002019">
    <property type="entry name" value="Urease_beta-like"/>
</dbReference>
<dbReference type="InterPro" id="IPR036461">
    <property type="entry name" value="Urease_betasu_sf"/>
</dbReference>
<dbReference type="InterPro" id="IPR050069">
    <property type="entry name" value="Urease_subunit"/>
</dbReference>
<dbReference type="NCBIfam" id="NF009682">
    <property type="entry name" value="PRK13203.1"/>
    <property type="match status" value="1"/>
</dbReference>
<dbReference type="NCBIfam" id="TIGR00192">
    <property type="entry name" value="urease_beta"/>
    <property type="match status" value="1"/>
</dbReference>
<dbReference type="PANTHER" id="PTHR33569">
    <property type="entry name" value="UREASE"/>
    <property type="match status" value="1"/>
</dbReference>
<dbReference type="PANTHER" id="PTHR33569:SF1">
    <property type="entry name" value="UREASE"/>
    <property type="match status" value="1"/>
</dbReference>
<dbReference type="Pfam" id="PF00699">
    <property type="entry name" value="Urease_beta"/>
    <property type="match status" value="1"/>
</dbReference>
<dbReference type="SUPFAM" id="SSF51278">
    <property type="entry name" value="Urease, beta-subunit"/>
    <property type="match status" value="1"/>
</dbReference>
<sequence>MIPGELLAEPGELELNAGRPTITLVVANTGDRPIQVGSHYHFYETNAGLSFDREAARGFRLDIAAGTAVRFEPGQTRTVQLVALAGDRKVYGFRGLVQGAL</sequence>
<keyword id="KW-0963">Cytoplasm</keyword>
<keyword id="KW-0378">Hydrolase</keyword>
<accession>Q47G54</accession>
<proteinExistence type="inferred from homology"/>
<protein>
    <recommendedName>
        <fullName evidence="1">Urease subunit beta</fullName>
        <ecNumber evidence="1">3.5.1.5</ecNumber>
    </recommendedName>
    <alternativeName>
        <fullName evidence="1">Urea amidohydrolase subunit beta</fullName>
    </alternativeName>
</protein>
<gene>
    <name evidence="1" type="primary">ureB</name>
    <name type="ordered locus">Daro_1428</name>
</gene>
<comment type="catalytic activity">
    <reaction evidence="1">
        <text>urea + 2 H2O + H(+) = hydrogencarbonate + 2 NH4(+)</text>
        <dbReference type="Rhea" id="RHEA:20557"/>
        <dbReference type="ChEBI" id="CHEBI:15377"/>
        <dbReference type="ChEBI" id="CHEBI:15378"/>
        <dbReference type="ChEBI" id="CHEBI:16199"/>
        <dbReference type="ChEBI" id="CHEBI:17544"/>
        <dbReference type="ChEBI" id="CHEBI:28938"/>
        <dbReference type="EC" id="3.5.1.5"/>
    </reaction>
</comment>
<comment type="pathway">
    <text evidence="1">Nitrogen metabolism; urea degradation; CO(2) and NH(3) from urea (urease route): step 1/1.</text>
</comment>
<comment type="subunit">
    <text evidence="1">Heterotrimer of UreA (gamma), UreB (beta) and UreC (alpha) subunits. Three heterotrimers associate to form the active enzyme.</text>
</comment>
<comment type="subcellular location">
    <subcellularLocation>
        <location evidence="1">Cytoplasm</location>
    </subcellularLocation>
</comment>
<comment type="similarity">
    <text evidence="1">Belongs to the urease beta subunit family.</text>
</comment>
<feature type="chain" id="PRO_0000234247" description="Urease subunit beta">
    <location>
        <begin position="1"/>
        <end position="101"/>
    </location>
</feature>
<organism>
    <name type="scientific">Dechloromonas aromatica (strain RCB)</name>
    <dbReference type="NCBI Taxonomy" id="159087"/>
    <lineage>
        <taxon>Bacteria</taxon>
        <taxon>Pseudomonadati</taxon>
        <taxon>Pseudomonadota</taxon>
        <taxon>Betaproteobacteria</taxon>
        <taxon>Rhodocyclales</taxon>
        <taxon>Azonexaceae</taxon>
        <taxon>Dechloromonas</taxon>
    </lineage>
</organism>